<evidence type="ECO:0000255" key="1">
    <source>
        <dbReference type="HAMAP-Rule" id="MF_00386"/>
    </source>
</evidence>
<dbReference type="EMBL" id="AE016853">
    <property type="protein sequence ID" value="AAO59026.1"/>
    <property type="molecule type" value="Genomic_DNA"/>
</dbReference>
<dbReference type="RefSeq" id="NP_795331.1">
    <property type="nucleotide sequence ID" value="NC_004578.1"/>
</dbReference>
<dbReference type="STRING" id="223283.PSPTO_5613"/>
<dbReference type="KEGG" id="pst:PSPTO_5613"/>
<dbReference type="PATRIC" id="fig|223283.9.peg.5750"/>
<dbReference type="eggNOG" id="COG0759">
    <property type="taxonomic scope" value="Bacteria"/>
</dbReference>
<dbReference type="HOGENOM" id="CLU_144811_6_1_6"/>
<dbReference type="OrthoDB" id="9801753at2"/>
<dbReference type="PhylomeDB" id="Q87TS0"/>
<dbReference type="Proteomes" id="UP000002515">
    <property type="component" value="Chromosome"/>
</dbReference>
<dbReference type="GO" id="GO:0005886">
    <property type="term" value="C:plasma membrane"/>
    <property type="evidence" value="ECO:0007669"/>
    <property type="project" value="UniProtKB-SubCell"/>
</dbReference>
<dbReference type="HAMAP" id="MF_00386">
    <property type="entry name" value="UPF0161_YidD"/>
    <property type="match status" value="1"/>
</dbReference>
<dbReference type="InterPro" id="IPR002696">
    <property type="entry name" value="Membr_insert_effic_factor_YidD"/>
</dbReference>
<dbReference type="NCBIfam" id="TIGR00278">
    <property type="entry name" value="membrane protein insertion efficiency factor YidD"/>
    <property type="match status" value="1"/>
</dbReference>
<dbReference type="PANTHER" id="PTHR33383">
    <property type="entry name" value="MEMBRANE PROTEIN INSERTION EFFICIENCY FACTOR-RELATED"/>
    <property type="match status" value="1"/>
</dbReference>
<dbReference type="PANTHER" id="PTHR33383:SF1">
    <property type="entry name" value="MEMBRANE PROTEIN INSERTION EFFICIENCY FACTOR-RELATED"/>
    <property type="match status" value="1"/>
</dbReference>
<dbReference type="Pfam" id="PF01809">
    <property type="entry name" value="YidD"/>
    <property type="match status" value="1"/>
</dbReference>
<dbReference type="SMART" id="SM01234">
    <property type="entry name" value="Haemolytic"/>
    <property type="match status" value="1"/>
</dbReference>
<name>YIDD_PSESM</name>
<reference key="1">
    <citation type="journal article" date="2003" name="Proc. Natl. Acad. Sci. U.S.A.">
        <title>The complete genome sequence of the Arabidopsis and tomato pathogen Pseudomonas syringae pv. tomato DC3000.</title>
        <authorList>
            <person name="Buell C.R."/>
            <person name="Joardar V."/>
            <person name="Lindeberg M."/>
            <person name="Selengut J."/>
            <person name="Paulsen I.T."/>
            <person name="Gwinn M.L."/>
            <person name="Dodson R.J."/>
            <person name="DeBoy R.T."/>
            <person name="Durkin A.S."/>
            <person name="Kolonay J.F."/>
            <person name="Madupu R."/>
            <person name="Daugherty S.C."/>
            <person name="Brinkac L.M."/>
            <person name="Beanan M.J."/>
            <person name="Haft D.H."/>
            <person name="Nelson W.C."/>
            <person name="Davidsen T.M."/>
            <person name="Zafar N."/>
            <person name="Zhou L."/>
            <person name="Liu J."/>
            <person name="Yuan Q."/>
            <person name="Khouri H.M."/>
            <person name="Fedorova N.B."/>
            <person name="Tran B."/>
            <person name="Russell D."/>
            <person name="Berry K.J."/>
            <person name="Utterback T.R."/>
            <person name="Van Aken S.E."/>
            <person name="Feldblyum T.V."/>
            <person name="D'Ascenzo M."/>
            <person name="Deng W.-L."/>
            <person name="Ramos A.R."/>
            <person name="Alfano J.R."/>
            <person name="Cartinhour S."/>
            <person name="Chatterjee A.K."/>
            <person name="Delaney T.P."/>
            <person name="Lazarowitz S.G."/>
            <person name="Martin G.B."/>
            <person name="Schneider D.J."/>
            <person name="Tang X."/>
            <person name="Bender C.L."/>
            <person name="White O."/>
            <person name="Fraser C.M."/>
            <person name="Collmer A."/>
        </authorList>
    </citation>
    <scope>NUCLEOTIDE SEQUENCE [LARGE SCALE GENOMIC DNA]</scope>
    <source>
        <strain>ATCC BAA-871 / DC3000</strain>
    </source>
</reference>
<accession>Q87TS0</accession>
<protein>
    <recommendedName>
        <fullName evidence="1">Putative membrane protein insertion efficiency factor</fullName>
    </recommendedName>
</protein>
<proteinExistence type="inferred from homology"/>
<sequence length="81" mass="9148">MRKLALVPIQFYRYAISPLMASHCRFYPSCSCYAYEAIDNHGLLRGGWLSIRRLGRCHPWNPGGYDPVPAVPTSRSSSMAE</sequence>
<feature type="chain" id="PRO_0000171857" description="Putative membrane protein insertion efficiency factor">
    <location>
        <begin position="1"/>
        <end position="81"/>
    </location>
</feature>
<organism>
    <name type="scientific">Pseudomonas syringae pv. tomato (strain ATCC BAA-871 / DC3000)</name>
    <dbReference type="NCBI Taxonomy" id="223283"/>
    <lineage>
        <taxon>Bacteria</taxon>
        <taxon>Pseudomonadati</taxon>
        <taxon>Pseudomonadota</taxon>
        <taxon>Gammaproteobacteria</taxon>
        <taxon>Pseudomonadales</taxon>
        <taxon>Pseudomonadaceae</taxon>
        <taxon>Pseudomonas</taxon>
    </lineage>
</organism>
<keyword id="KW-0997">Cell inner membrane</keyword>
<keyword id="KW-1003">Cell membrane</keyword>
<keyword id="KW-0472">Membrane</keyword>
<keyword id="KW-1185">Reference proteome</keyword>
<comment type="function">
    <text evidence="1">Could be involved in insertion of integral membrane proteins into the membrane.</text>
</comment>
<comment type="subcellular location">
    <subcellularLocation>
        <location evidence="1">Cell inner membrane</location>
        <topology evidence="1">Peripheral membrane protein</topology>
        <orientation evidence="1">Cytoplasmic side</orientation>
    </subcellularLocation>
</comment>
<comment type="similarity">
    <text evidence="1">Belongs to the UPF0161 family.</text>
</comment>
<gene>
    <name type="ordered locus">PSPTO_5613</name>
</gene>